<proteinExistence type="evidence at protein level"/>
<organism>
    <name type="scientific">Homo sapiens</name>
    <name type="common">Human</name>
    <dbReference type="NCBI Taxonomy" id="9606"/>
    <lineage>
        <taxon>Eukaryota</taxon>
        <taxon>Metazoa</taxon>
        <taxon>Chordata</taxon>
        <taxon>Craniata</taxon>
        <taxon>Vertebrata</taxon>
        <taxon>Euteleostomi</taxon>
        <taxon>Mammalia</taxon>
        <taxon>Eutheria</taxon>
        <taxon>Euarchontoglires</taxon>
        <taxon>Primates</taxon>
        <taxon>Haplorrhini</taxon>
        <taxon>Catarrhini</taxon>
        <taxon>Hominidae</taxon>
        <taxon>Homo</taxon>
    </lineage>
</organism>
<feature type="chain" id="PRO_0000301671" description="Dynein axonemal assembly factor 10">
    <location>
        <begin position="1"/>
        <end position="357"/>
    </location>
</feature>
<feature type="repeat" description="WD 1">
    <location>
        <begin position="63"/>
        <end position="105"/>
    </location>
</feature>
<feature type="repeat" description="WD 2">
    <location>
        <begin position="115"/>
        <end position="154"/>
    </location>
</feature>
<feature type="repeat" description="WD 3">
    <location>
        <begin position="162"/>
        <end position="205"/>
    </location>
</feature>
<feature type="repeat" description="WD 4">
    <location>
        <begin position="207"/>
        <end position="249"/>
    </location>
</feature>
<feature type="repeat" description="WD 5">
    <location>
        <begin position="257"/>
        <end position="297"/>
    </location>
</feature>
<feature type="repeat" description="WD 6">
    <location>
        <begin position="319"/>
        <end position="357"/>
    </location>
</feature>
<feature type="splice variant" id="VSP_045123" description="In isoform 2." evidence="6">
    <location>
        <begin position="289"/>
        <end position="357"/>
    </location>
</feature>
<feature type="sequence variant" id="VAR_053438" description="In dbSNP:rs13009282.">
    <original>M</original>
    <variation>V</variation>
    <location>
        <position position="241"/>
    </location>
</feature>
<feature type="strand" evidence="8">
    <location>
        <begin position="9"/>
        <end position="16"/>
    </location>
</feature>
<feature type="strand" evidence="8">
    <location>
        <begin position="18"/>
        <end position="26"/>
    </location>
</feature>
<feature type="strand" evidence="8">
    <location>
        <begin position="30"/>
        <end position="38"/>
    </location>
</feature>
<feature type="strand" evidence="8">
    <location>
        <begin position="44"/>
        <end position="51"/>
    </location>
</feature>
<feature type="strand" evidence="8">
    <location>
        <begin position="53"/>
        <end position="66"/>
    </location>
</feature>
<feature type="strand" evidence="8">
    <location>
        <begin position="68"/>
        <end position="72"/>
    </location>
</feature>
<feature type="turn" evidence="8">
    <location>
        <begin position="78"/>
        <end position="80"/>
    </location>
</feature>
<feature type="strand" evidence="8">
    <location>
        <begin position="83"/>
        <end position="87"/>
    </location>
</feature>
<feature type="strand" evidence="8">
    <location>
        <begin position="92"/>
        <end position="95"/>
    </location>
</feature>
<feature type="strand" evidence="8">
    <location>
        <begin position="104"/>
        <end position="107"/>
    </location>
</feature>
<feature type="strand" evidence="8">
    <location>
        <begin position="114"/>
        <end position="121"/>
    </location>
</feature>
<feature type="helix" evidence="8">
    <location>
        <begin position="122"/>
        <end position="124"/>
    </location>
</feature>
<feature type="strand" evidence="8">
    <location>
        <begin position="131"/>
        <end position="136"/>
    </location>
</feature>
<feature type="strand" evidence="8">
    <location>
        <begin position="141"/>
        <end position="144"/>
    </location>
</feature>
<feature type="strand" evidence="8">
    <location>
        <begin position="153"/>
        <end position="156"/>
    </location>
</feature>
<feature type="strand" evidence="8">
    <location>
        <begin position="167"/>
        <end position="173"/>
    </location>
</feature>
<feature type="strand" evidence="8">
    <location>
        <begin position="182"/>
        <end position="187"/>
    </location>
</feature>
<feature type="strand" evidence="8">
    <location>
        <begin position="190"/>
        <end position="196"/>
    </location>
</feature>
<feature type="turn" evidence="8">
    <location>
        <begin position="197"/>
        <end position="200"/>
    </location>
</feature>
<feature type="strand" evidence="8">
    <location>
        <begin position="201"/>
        <end position="207"/>
    </location>
</feature>
<feature type="strand" evidence="8">
    <location>
        <begin position="212"/>
        <end position="218"/>
    </location>
</feature>
<feature type="strand" evidence="8">
    <location>
        <begin position="220"/>
        <end position="223"/>
    </location>
</feature>
<feature type="strand" evidence="8">
    <location>
        <begin position="226"/>
        <end position="232"/>
    </location>
</feature>
<feature type="strand" evidence="8">
    <location>
        <begin position="235"/>
        <end position="240"/>
    </location>
</feature>
<feature type="turn" evidence="8">
    <location>
        <begin position="246"/>
        <end position="248"/>
    </location>
</feature>
<feature type="strand" evidence="8">
    <location>
        <begin position="252"/>
        <end position="256"/>
    </location>
</feature>
<feature type="strand" evidence="8">
    <location>
        <begin position="262"/>
        <end position="268"/>
    </location>
</feature>
<feature type="strand" evidence="8">
    <location>
        <begin position="271"/>
        <end position="279"/>
    </location>
</feature>
<feature type="strand" evidence="8">
    <location>
        <begin position="282"/>
        <end position="290"/>
    </location>
</feature>
<feature type="strand" evidence="8">
    <location>
        <begin position="310"/>
        <end position="318"/>
    </location>
</feature>
<feature type="strand" evidence="8">
    <location>
        <begin position="324"/>
        <end position="329"/>
    </location>
</feature>
<feature type="strand" evidence="8">
    <location>
        <begin position="331"/>
        <end position="333"/>
    </location>
</feature>
<feature type="strand" evidence="8">
    <location>
        <begin position="336"/>
        <end position="341"/>
    </location>
</feature>
<feature type="strand" evidence="8">
    <location>
        <begin position="344"/>
        <end position="351"/>
    </location>
</feature>
<accession>Q96MX6</accession>
<accession>Q96CR6</accession>
<reference key="1">
    <citation type="journal article" date="2004" name="Nat. Genet.">
        <title>Complete sequencing and characterization of 21,243 full-length human cDNAs.</title>
        <authorList>
            <person name="Ota T."/>
            <person name="Suzuki Y."/>
            <person name="Nishikawa T."/>
            <person name="Otsuki T."/>
            <person name="Sugiyama T."/>
            <person name="Irie R."/>
            <person name="Wakamatsu A."/>
            <person name="Hayashi K."/>
            <person name="Sato H."/>
            <person name="Nagai K."/>
            <person name="Kimura K."/>
            <person name="Makita H."/>
            <person name="Sekine M."/>
            <person name="Obayashi M."/>
            <person name="Nishi T."/>
            <person name="Shibahara T."/>
            <person name="Tanaka T."/>
            <person name="Ishii S."/>
            <person name="Yamamoto J."/>
            <person name="Saito K."/>
            <person name="Kawai Y."/>
            <person name="Isono Y."/>
            <person name="Nakamura Y."/>
            <person name="Nagahari K."/>
            <person name="Murakami K."/>
            <person name="Yasuda T."/>
            <person name="Iwayanagi T."/>
            <person name="Wagatsuma M."/>
            <person name="Shiratori A."/>
            <person name="Sudo H."/>
            <person name="Hosoiri T."/>
            <person name="Kaku Y."/>
            <person name="Kodaira H."/>
            <person name="Kondo H."/>
            <person name="Sugawara M."/>
            <person name="Takahashi M."/>
            <person name="Kanda K."/>
            <person name="Yokoi T."/>
            <person name="Furuya T."/>
            <person name="Kikkawa E."/>
            <person name="Omura Y."/>
            <person name="Abe K."/>
            <person name="Kamihara K."/>
            <person name="Katsuta N."/>
            <person name="Sato K."/>
            <person name="Tanikawa M."/>
            <person name="Yamazaki M."/>
            <person name="Ninomiya K."/>
            <person name="Ishibashi T."/>
            <person name="Yamashita H."/>
            <person name="Murakawa K."/>
            <person name="Fujimori K."/>
            <person name="Tanai H."/>
            <person name="Kimata M."/>
            <person name="Watanabe M."/>
            <person name="Hiraoka S."/>
            <person name="Chiba Y."/>
            <person name="Ishida S."/>
            <person name="Ono Y."/>
            <person name="Takiguchi S."/>
            <person name="Watanabe S."/>
            <person name="Yosida M."/>
            <person name="Hotuta T."/>
            <person name="Kusano J."/>
            <person name="Kanehori K."/>
            <person name="Takahashi-Fujii A."/>
            <person name="Hara H."/>
            <person name="Tanase T.-O."/>
            <person name="Nomura Y."/>
            <person name="Togiya S."/>
            <person name="Komai F."/>
            <person name="Hara R."/>
            <person name="Takeuchi K."/>
            <person name="Arita M."/>
            <person name="Imose N."/>
            <person name="Musashino K."/>
            <person name="Yuuki H."/>
            <person name="Oshima A."/>
            <person name="Sasaki N."/>
            <person name="Aotsuka S."/>
            <person name="Yoshikawa Y."/>
            <person name="Matsunawa H."/>
            <person name="Ichihara T."/>
            <person name="Shiohata N."/>
            <person name="Sano S."/>
            <person name="Moriya S."/>
            <person name="Momiyama H."/>
            <person name="Satoh N."/>
            <person name="Takami S."/>
            <person name="Terashima Y."/>
            <person name="Suzuki O."/>
            <person name="Nakagawa S."/>
            <person name="Senoh A."/>
            <person name="Mizoguchi H."/>
            <person name="Goto Y."/>
            <person name="Shimizu F."/>
            <person name="Wakebe H."/>
            <person name="Hishigaki H."/>
            <person name="Watanabe T."/>
            <person name="Sugiyama A."/>
            <person name="Takemoto M."/>
            <person name="Kawakami B."/>
            <person name="Yamazaki M."/>
            <person name="Watanabe K."/>
            <person name="Kumagai A."/>
            <person name="Itakura S."/>
            <person name="Fukuzumi Y."/>
            <person name="Fujimori Y."/>
            <person name="Komiyama M."/>
            <person name="Tashiro H."/>
            <person name="Tanigami A."/>
            <person name="Fujiwara T."/>
            <person name="Ono T."/>
            <person name="Yamada K."/>
            <person name="Fujii Y."/>
            <person name="Ozaki K."/>
            <person name="Hirao M."/>
            <person name="Ohmori Y."/>
            <person name="Kawabata A."/>
            <person name="Hikiji T."/>
            <person name="Kobatake N."/>
            <person name="Inagaki H."/>
            <person name="Ikema Y."/>
            <person name="Okamoto S."/>
            <person name="Okitani R."/>
            <person name="Kawakami T."/>
            <person name="Noguchi S."/>
            <person name="Itoh T."/>
            <person name="Shigeta K."/>
            <person name="Senba T."/>
            <person name="Matsumura K."/>
            <person name="Nakajima Y."/>
            <person name="Mizuno T."/>
            <person name="Morinaga M."/>
            <person name="Sasaki M."/>
            <person name="Togashi T."/>
            <person name="Oyama M."/>
            <person name="Hata H."/>
            <person name="Watanabe M."/>
            <person name="Komatsu T."/>
            <person name="Mizushima-Sugano J."/>
            <person name="Satoh T."/>
            <person name="Shirai Y."/>
            <person name="Takahashi Y."/>
            <person name="Nakagawa K."/>
            <person name="Okumura K."/>
            <person name="Nagase T."/>
            <person name="Nomura N."/>
            <person name="Kikuchi H."/>
            <person name="Masuho Y."/>
            <person name="Yamashita R."/>
            <person name="Nakai K."/>
            <person name="Yada T."/>
            <person name="Nakamura Y."/>
            <person name="Ohara O."/>
            <person name="Isogai T."/>
            <person name="Sugano S."/>
        </authorList>
    </citation>
    <scope>NUCLEOTIDE SEQUENCE [LARGE SCALE MRNA] (ISOFORM 1)</scope>
</reference>
<reference key="2">
    <citation type="journal article" date="2005" name="Nature">
        <title>Generation and annotation of the DNA sequences of human chromosomes 2 and 4.</title>
        <authorList>
            <person name="Hillier L.W."/>
            <person name="Graves T.A."/>
            <person name="Fulton R.S."/>
            <person name="Fulton L.A."/>
            <person name="Pepin K.H."/>
            <person name="Minx P."/>
            <person name="Wagner-McPherson C."/>
            <person name="Layman D."/>
            <person name="Wylie K."/>
            <person name="Sekhon M."/>
            <person name="Becker M.C."/>
            <person name="Fewell G.A."/>
            <person name="Delehaunty K.D."/>
            <person name="Miner T.L."/>
            <person name="Nash W.E."/>
            <person name="Kremitzki C."/>
            <person name="Oddy L."/>
            <person name="Du H."/>
            <person name="Sun H."/>
            <person name="Bradshaw-Cordum H."/>
            <person name="Ali J."/>
            <person name="Carter J."/>
            <person name="Cordes M."/>
            <person name="Harris A."/>
            <person name="Isak A."/>
            <person name="van Brunt A."/>
            <person name="Nguyen C."/>
            <person name="Du F."/>
            <person name="Courtney L."/>
            <person name="Kalicki J."/>
            <person name="Ozersky P."/>
            <person name="Abbott S."/>
            <person name="Armstrong J."/>
            <person name="Belter E.A."/>
            <person name="Caruso L."/>
            <person name="Cedroni M."/>
            <person name="Cotton M."/>
            <person name="Davidson T."/>
            <person name="Desai A."/>
            <person name="Elliott G."/>
            <person name="Erb T."/>
            <person name="Fronick C."/>
            <person name="Gaige T."/>
            <person name="Haakenson W."/>
            <person name="Haglund K."/>
            <person name="Holmes A."/>
            <person name="Harkins R."/>
            <person name="Kim K."/>
            <person name="Kruchowski S.S."/>
            <person name="Strong C.M."/>
            <person name="Grewal N."/>
            <person name="Goyea E."/>
            <person name="Hou S."/>
            <person name="Levy A."/>
            <person name="Martinka S."/>
            <person name="Mead K."/>
            <person name="McLellan M.D."/>
            <person name="Meyer R."/>
            <person name="Randall-Maher J."/>
            <person name="Tomlinson C."/>
            <person name="Dauphin-Kohlberg S."/>
            <person name="Kozlowicz-Reilly A."/>
            <person name="Shah N."/>
            <person name="Swearengen-Shahid S."/>
            <person name="Snider J."/>
            <person name="Strong J.T."/>
            <person name="Thompson J."/>
            <person name="Yoakum M."/>
            <person name="Leonard S."/>
            <person name="Pearman C."/>
            <person name="Trani L."/>
            <person name="Radionenko M."/>
            <person name="Waligorski J.E."/>
            <person name="Wang C."/>
            <person name="Rock S.M."/>
            <person name="Tin-Wollam A.-M."/>
            <person name="Maupin R."/>
            <person name="Latreille P."/>
            <person name="Wendl M.C."/>
            <person name="Yang S.-P."/>
            <person name="Pohl C."/>
            <person name="Wallis J.W."/>
            <person name="Spieth J."/>
            <person name="Bieri T.A."/>
            <person name="Berkowicz N."/>
            <person name="Nelson J.O."/>
            <person name="Osborne J."/>
            <person name="Ding L."/>
            <person name="Meyer R."/>
            <person name="Sabo A."/>
            <person name="Shotland Y."/>
            <person name="Sinha P."/>
            <person name="Wohldmann P.E."/>
            <person name="Cook L.L."/>
            <person name="Hickenbotham M.T."/>
            <person name="Eldred J."/>
            <person name="Williams D."/>
            <person name="Jones T.A."/>
            <person name="She X."/>
            <person name="Ciccarelli F.D."/>
            <person name="Izaurralde E."/>
            <person name="Taylor J."/>
            <person name="Schmutz J."/>
            <person name="Myers R.M."/>
            <person name="Cox D.R."/>
            <person name="Huang X."/>
            <person name="McPherson J.D."/>
            <person name="Mardis E.R."/>
            <person name="Clifton S.W."/>
            <person name="Warren W.C."/>
            <person name="Chinwalla A.T."/>
            <person name="Eddy S.R."/>
            <person name="Marra M.A."/>
            <person name="Ovcharenko I."/>
            <person name="Furey T.S."/>
            <person name="Miller W."/>
            <person name="Eichler E.E."/>
            <person name="Bork P."/>
            <person name="Suyama M."/>
            <person name="Torrents D."/>
            <person name="Waterston R.H."/>
            <person name="Wilson R.K."/>
        </authorList>
    </citation>
    <scope>NUCLEOTIDE SEQUENCE [LARGE SCALE GENOMIC DNA]</scope>
</reference>
<reference key="3">
    <citation type="journal article" date="2004" name="Genome Res.">
        <title>The status, quality, and expansion of the NIH full-length cDNA project: the Mammalian Gene Collection (MGC).</title>
        <authorList>
            <consortium name="The MGC Project Team"/>
        </authorList>
    </citation>
    <scope>NUCLEOTIDE SEQUENCE [LARGE SCALE MRNA] (ISOFORM 1)</scope>
    <source>
        <tissue>B-cell</tissue>
        <tissue>Skin</tissue>
    </source>
</reference>
<reference key="4">
    <citation type="journal article" date="2006" name="Biochem. Biophys. Res. Commun.">
        <title>Monad, a WD40 repeat protein, promotes apoptosis induced by TNF-alpha.</title>
        <authorList>
            <person name="Saeki M."/>
            <person name="Irie Y."/>
            <person name="Ni L."/>
            <person name="Yoshida M."/>
            <person name="Itsuki Y."/>
            <person name="Kamisaki Y."/>
        </authorList>
    </citation>
    <scope>TISSUE SPECIFICITY</scope>
</reference>
<reference key="5">
    <citation type="journal article" date="2010" name="Biochem. Biophys. Res. Commun.">
        <title>PIH1D1, a subunit of R2TP complex, inhibits doxorubicin-induced apoptosis.</title>
        <authorList>
            <person name="Inoue M."/>
            <person name="Saeki M."/>
            <person name="Egusa H."/>
            <person name="Niwa H."/>
            <person name="Kamisaki Y."/>
        </authorList>
    </citation>
    <scope>INTERACTION WITH PIH1D1</scope>
</reference>
<reference key="6">
    <citation type="journal article" date="2011" name="BMC Syst. Biol.">
        <title>Initial characterization of the human central proteome.</title>
        <authorList>
            <person name="Burkard T.R."/>
            <person name="Planyavsky M."/>
            <person name="Kaupe I."/>
            <person name="Breitwieser F.P."/>
            <person name="Buerckstuemmer T."/>
            <person name="Bennett K.L."/>
            <person name="Superti-Furga G."/>
            <person name="Colinge J."/>
        </authorList>
    </citation>
    <scope>IDENTIFICATION BY MASS SPECTROMETRY [LARGE SCALE ANALYSIS]</scope>
</reference>
<reference key="7">
    <citation type="journal article" date="2020" name="J. Proteome Res.">
        <title>Upstream ORF-Encoded ASDURF Is a Novel Prefoldin-like Subunit of the PAQosome.</title>
        <authorList>
            <person name="Cloutier P."/>
            <person name="Poitras C."/>
            <person name="Faubert D."/>
            <person name="Bouchard A."/>
            <person name="Blanchette M."/>
            <person name="Gauthier M.S."/>
            <person name="Coulombe B."/>
        </authorList>
    </citation>
    <scope>IDENTIFICATION IN THE PAQOSOME COMPLEX</scope>
    <scope>IDENTIFICATION BY MASS SPECTROMETRY</scope>
</reference>
<reference key="8">
    <citation type="journal article" date="2011" name="Protein Cell">
        <title>Structure and function of WD40 domain proteins.</title>
        <authorList>
            <person name="Xu C."/>
            <person name="Min J."/>
        </authorList>
    </citation>
    <scope>X-RAY CRYSTALLOGRAPHY (1.95 ANGSTROMS)</scope>
</reference>
<comment type="function">
    <text evidence="1">Key assembly factor specifically required for the stability of axonemal dynein heavy chains in cytoplasm.</text>
</comment>
<comment type="subunit">
    <text evidence="1 3 4">Component of the PAQosome complex which is responsible for the biogenesis of several protein complexes and which consists of R2TP complex members RUVBL1, RUVBL2, RPAP3 and PIH1D1, URI complex members PFDN2, PFDN6, PDRG1, UXT and URI1 as well as ASDURF, POLR2E and DNAAF10/WDR92 (PubMed:31738558). Interacts with PIH1D1; the interaction associates DNAAF10 with the R2TP complex (PubMed:21078300). Interacts with several dynein axonemal assembly factors (By similarity).</text>
</comment>
<comment type="interaction">
    <interactant intactId="EBI-2434101">
        <id>Q96MX6</id>
    </interactant>
    <interactant intactId="EBI-356928">
        <id>Q9H6T3</id>
        <label>RPAP3</label>
    </interactant>
    <organismsDiffer>false</organismsDiffer>
    <experiments>7</experiments>
</comment>
<comment type="subcellular location">
    <subcellularLocation>
        <location evidence="1">Dynein axonemal particle</location>
    </subcellularLocation>
</comment>
<comment type="alternative products">
    <event type="alternative splicing"/>
    <isoform>
        <id>Q96MX6-1</id>
        <name>1</name>
        <sequence type="displayed"/>
    </isoform>
    <isoform>
        <id>Q96MX6-2</id>
        <name>2</name>
        <sequence type="described" ref="VSP_045123"/>
    </isoform>
</comment>
<comment type="tissue specificity">
    <text evidence="2">Widely expressed with the highest expression in testis.</text>
</comment>
<keyword id="KW-0002">3D-structure</keyword>
<keyword id="KW-0025">Alternative splicing</keyword>
<keyword id="KW-0053">Apoptosis</keyword>
<keyword id="KW-0963">Cytoplasm</keyword>
<keyword id="KW-1267">Proteomics identification</keyword>
<keyword id="KW-1185">Reference proteome</keyword>
<keyword id="KW-0677">Repeat</keyword>
<keyword id="KW-0853">WD repeat</keyword>
<gene>
    <name evidence="7" type="primary">DNAAF10</name>
    <name type="synonym">WDR92</name>
</gene>
<name>DAA10_HUMAN</name>
<sequence length="357" mass="39740">MSAFEKPQIIAHIQKGFNYTVFDCKWVPCSAKFVTMGNFARGTGVIQLYEIQHGDLKLLREIEKAKPIKCGTFGATSLQQRYLATGDFGGNLHIWNLEAPEMPVYSVKGHKEIINAIDGIGGLGIGEGAPEIVTGSRDGTVKVWDPRQKDDPVANMEPVQGENKRDCWTVAFGNAYNQEERVVCAGYDNGDIKLFDLRNMALRWETNIKNGVCSLEFDRKDISMNKLVATSLEGKFHVFDMRTQHPTKGFASVSEKAHKSTVWQVRHLPQNRELFLTAGGAGGLHLWKYEYPIQRSKKDSEGIEMGVAGSVSLLQNVTLSTQPISSLDWSPDKRGLCVCSSFDQTVRVLIVTKLNKI</sequence>
<evidence type="ECO:0000250" key="1">
    <source>
        <dbReference type="UniProtKB" id="A8J3F6"/>
    </source>
</evidence>
<evidence type="ECO:0000269" key="2">
    <source>
    </source>
</evidence>
<evidence type="ECO:0000269" key="3">
    <source>
    </source>
</evidence>
<evidence type="ECO:0000269" key="4">
    <source>
    </source>
</evidence>
<evidence type="ECO:0000303" key="5">
    <source>
    </source>
</evidence>
<evidence type="ECO:0000305" key="6"/>
<evidence type="ECO:0000312" key="7">
    <source>
        <dbReference type="HGNC" id="HGNC:25176"/>
    </source>
</evidence>
<evidence type="ECO:0007829" key="8">
    <source>
        <dbReference type="PDB" id="3I2N"/>
    </source>
</evidence>
<dbReference type="EMBL" id="AK056303">
    <property type="protein sequence ID" value="BAB71143.1"/>
    <property type="molecule type" value="mRNA"/>
</dbReference>
<dbReference type="EMBL" id="AC017083">
    <property type="protein sequence ID" value="AAY14713.1"/>
    <property type="molecule type" value="Genomic_DNA"/>
</dbReference>
<dbReference type="EMBL" id="BC014022">
    <property type="protein sequence ID" value="AAH14022.2"/>
    <property type="molecule type" value="mRNA"/>
</dbReference>
<dbReference type="EMBL" id="BC066657">
    <property type="protein sequence ID" value="AAH66657.1"/>
    <property type="molecule type" value="mRNA"/>
</dbReference>
<dbReference type="CCDS" id="CCDS1884.1">
    <molecule id="Q96MX6-1"/>
</dbReference>
<dbReference type="CCDS" id="CCDS58712.1">
    <molecule id="Q96MX6-2"/>
</dbReference>
<dbReference type="RefSeq" id="NP_001243405.1">
    <molecule id="Q96MX6-2"/>
    <property type="nucleotide sequence ID" value="NM_001256476.2"/>
</dbReference>
<dbReference type="RefSeq" id="NP_612467.1">
    <molecule id="Q96MX6-1"/>
    <property type="nucleotide sequence ID" value="NM_138458.4"/>
</dbReference>
<dbReference type="PDB" id="3I2N">
    <property type="method" value="X-ray"/>
    <property type="resolution" value="1.95 A"/>
    <property type="chains" value="A=1-357"/>
</dbReference>
<dbReference type="PDBsum" id="3I2N"/>
<dbReference type="SMR" id="Q96MX6"/>
<dbReference type="BioGRID" id="125479">
    <property type="interactions" value="142"/>
</dbReference>
<dbReference type="ComplexPortal" id="CPX-6145">
    <property type="entry name" value="PAQosome co-chaperone complex"/>
</dbReference>
<dbReference type="FunCoup" id="Q96MX6">
    <property type="interactions" value="1022"/>
</dbReference>
<dbReference type="IntAct" id="Q96MX6">
    <property type="interactions" value="53"/>
</dbReference>
<dbReference type="MINT" id="Q96MX6"/>
<dbReference type="STRING" id="9606.ENSP00000295121"/>
<dbReference type="iPTMnet" id="Q96MX6"/>
<dbReference type="PhosphoSitePlus" id="Q96MX6"/>
<dbReference type="SwissPalm" id="Q96MX6"/>
<dbReference type="BioMuta" id="WDR92"/>
<dbReference type="DMDM" id="74760987"/>
<dbReference type="jPOST" id="Q96MX6"/>
<dbReference type="MassIVE" id="Q96MX6"/>
<dbReference type="PaxDb" id="9606-ENSP00000295121"/>
<dbReference type="PeptideAtlas" id="Q96MX6"/>
<dbReference type="ProteomicsDB" id="76211"/>
<dbReference type="ProteomicsDB" id="77429">
    <molecule id="Q96MX6-1"/>
</dbReference>
<dbReference type="Pumba" id="Q96MX6"/>
<dbReference type="Antibodypedia" id="48145">
    <property type="antibodies" value="114 antibodies from 22 providers"/>
</dbReference>
<dbReference type="DNASU" id="116143"/>
<dbReference type="Ensembl" id="ENST00000295121.11">
    <molecule id="Q96MX6-1"/>
    <property type="protein sequence ID" value="ENSP00000295121.6"/>
    <property type="gene ID" value="ENSG00000243667.7"/>
</dbReference>
<dbReference type="Ensembl" id="ENST00000409164.1">
    <molecule id="Q96MX6-2"/>
    <property type="protein sequence ID" value="ENSP00000386746.1"/>
    <property type="gene ID" value="ENSG00000243667.7"/>
</dbReference>
<dbReference type="GeneID" id="116143"/>
<dbReference type="KEGG" id="hsa:116143"/>
<dbReference type="MANE-Select" id="ENST00000295121.11">
    <property type="protein sequence ID" value="ENSP00000295121.6"/>
    <property type="RefSeq nucleotide sequence ID" value="NM_138458.4"/>
    <property type="RefSeq protein sequence ID" value="NP_612467.1"/>
</dbReference>
<dbReference type="UCSC" id="uc002see.3">
    <molecule id="Q96MX6-1"/>
    <property type="organism name" value="human"/>
</dbReference>
<dbReference type="AGR" id="HGNC:25176"/>
<dbReference type="CTD" id="116143"/>
<dbReference type="DisGeNET" id="116143"/>
<dbReference type="GeneCards" id="DNAAF10"/>
<dbReference type="HGNC" id="HGNC:25176">
    <property type="gene designation" value="DNAAF10"/>
</dbReference>
<dbReference type="HPA" id="ENSG00000243667">
    <property type="expression patterns" value="Low tissue specificity"/>
</dbReference>
<dbReference type="MIM" id="610729">
    <property type="type" value="gene"/>
</dbReference>
<dbReference type="neXtProt" id="NX_Q96MX6"/>
<dbReference type="OpenTargets" id="ENSG00000243667"/>
<dbReference type="VEuPathDB" id="HostDB:ENSG00000243667"/>
<dbReference type="eggNOG" id="KOG0034">
    <property type="taxonomic scope" value="Eukaryota"/>
</dbReference>
<dbReference type="GeneTree" id="ENSGT00950000183091"/>
<dbReference type="HOGENOM" id="CLU_062543_0_0_1"/>
<dbReference type="InParanoid" id="Q96MX6"/>
<dbReference type="OMA" id="CLWKYNY"/>
<dbReference type="OrthoDB" id="10248252at2759"/>
<dbReference type="PAN-GO" id="Q96MX6">
    <property type="GO annotations" value="1 GO annotation based on evolutionary models"/>
</dbReference>
<dbReference type="PhylomeDB" id="Q96MX6"/>
<dbReference type="TreeFam" id="TF351064"/>
<dbReference type="PathwayCommons" id="Q96MX6"/>
<dbReference type="SignaLink" id="Q96MX6"/>
<dbReference type="SIGNOR" id="Q96MX6"/>
<dbReference type="BioGRID-ORCS" id="116143">
    <property type="hits" value="588 hits in 1175 CRISPR screens"/>
</dbReference>
<dbReference type="ChiTaRS" id="WDR92">
    <property type="organism name" value="human"/>
</dbReference>
<dbReference type="EvolutionaryTrace" id="Q96MX6"/>
<dbReference type="GenomeRNAi" id="116143"/>
<dbReference type="Pharos" id="Q96MX6">
    <property type="development level" value="Tbio"/>
</dbReference>
<dbReference type="PRO" id="PR:Q96MX6"/>
<dbReference type="Proteomes" id="UP000005640">
    <property type="component" value="Chromosome 2"/>
</dbReference>
<dbReference type="RNAct" id="Q96MX6">
    <property type="molecule type" value="protein"/>
</dbReference>
<dbReference type="Bgee" id="ENSG00000243667">
    <property type="expression patterns" value="Expressed in primordial germ cell in gonad and 105 other cell types or tissues"/>
</dbReference>
<dbReference type="ExpressionAtlas" id="Q96MX6">
    <property type="expression patterns" value="baseline and differential"/>
</dbReference>
<dbReference type="GO" id="GO:0120293">
    <property type="term" value="C:dynein axonemal particle"/>
    <property type="evidence" value="ECO:0000250"/>
    <property type="project" value="UniProtKB"/>
</dbReference>
<dbReference type="GO" id="GO:1990062">
    <property type="term" value="C:RPAP3/R2TP/prefoldin-like complex"/>
    <property type="evidence" value="ECO:0000353"/>
    <property type="project" value="ComplexPortal"/>
</dbReference>
<dbReference type="GO" id="GO:0043130">
    <property type="term" value="F:ubiquitin binding"/>
    <property type="evidence" value="ECO:0000318"/>
    <property type="project" value="GO_Central"/>
</dbReference>
<dbReference type="GO" id="GO:0006915">
    <property type="term" value="P:apoptotic process"/>
    <property type="evidence" value="ECO:0007669"/>
    <property type="project" value="UniProtKB-KW"/>
</dbReference>
<dbReference type="GO" id="GO:0070286">
    <property type="term" value="P:axonemal dynein complex assembly"/>
    <property type="evidence" value="ECO:0000250"/>
    <property type="project" value="UniProtKB"/>
</dbReference>
<dbReference type="GO" id="GO:0050821">
    <property type="term" value="P:protein stabilization"/>
    <property type="evidence" value="ECO:0000303"/>
    <property type="project" value="ComplexPortal"/>
</dbReference>
<dbReference type="FunFam" id="2.130.10.10:FF:000258">
    <property type="entry name" value="WD repeat-containing protein 92"/>
    <property type="match status" value="1"/>
</dbReference>
<dbReference type="Gene3D" id="2.130.10.10">
    <property type="entry name" value="YVTN repeat-like/Quinoprotein amine dehydrogenase"/>
    <property type="match status" value="1"/>
</dbReference>
<dbReference type="InterPro" id="IPR015943">
    <property type="entry name" value="WD40/YVTN_repeat-like_dom_sf"/>
</dbReference>
<dbReference type="InterPro" id="IPR036322">
    <property type="entry name" value="WD40_repeat_dom_sf"/>
</dbReference>
<dbReference type="InterPro" id="IPR001680">
    <property type="entry name" value="WD40_rpt"/>
</dbReference>
<dbReference type="PANTHER" id="PTHR10971">
    <property type="entry name" value="MRNA EXPORT FACTOR AND BUB3"/>
    <property type="match status" value="1"/>
</dbReference>
<dbReference type="Pfam" id="PF00400">
    <property type="entry name" value="WD40"/>
    <property type="match status" value="2"/>
</dbReference>
<dbReference type="SMART" id="SM00320">
    <property type="entry name" value="WD40"/>
    <property type="match status" value="4"/>
</dbReference>
<dbReference type="SUPFAM" id="SSF50978">
    <property type="entry name" value="WD40 repeat-like"/>
    <property type="match status" value="1"/>
</dbReference>
<dbReference type="PROSITE" id="PS50082">
    <property type="entry name" value="WD_REPEATS_2"/>
    <property type="match status" value="1"/>
</dbReference>
<dbReference type="PROSITE" id="PS50294">
    <property type="entry name" value="WD_REPEATS_REGION"/>
    <property type="match status" value="1"/>
</dbReference>
<protein>
    <recommendedName>
        <fullName evidence="6">Dynein axonemal assembly factor 10</fullName>
    </recommendedName>
    <alternativeName>
        <fullName>WD repeat-containing protein 92</fullName>
    </alternativeName>
    <alternativeName>
        <fullName evidence="5">WD repeat-containing protein Monad</fullName>
    </alternativeName>
</protein>